<comment type="function">
    <text evidence="1">Could be a mediator in iron transactions between iron acquisition and iron-requiring processes, such as synthesis and/or repair of Fe-S clusters in biosynthetic enzymes.</text>
</comment>
<comment type="similarity">
    <text evidence="1">Belongs to the Fe(2+)-trafficking protein family.</text>
</comment>
<sequence>MSRTVHCVKLDHEAEGLDFPPYPGELGKRLYEQVSKEAWQMWMKHQTILINEYRLTLVDPKARQFLEQEMEKFFFGEGSTPPQEYTPPEQ</sequence>
<evidence type="ECO:0000255" key="1">
    <source>
        <dbReference type="HAMAP-Rule" id="MF_00686"/>
    </source>
</evidence>
<protein>
    <recommendedName>
        <fullName evidence="1">Probable Fe(2+)-trafficking protein</fullName>
    </recommendedName>
</protein>
<name>FETP_NITOC</name>
<accession>Q3J8X0</accession>
<dbReference type="EMBL" id="CP000127">
    <property type="protein sequence ID" value="ABA58726.1"/>
    <property type="molecule type" value="Genomic_DNA"/>
</dbReference>
<dbReference type="RefSeq" id="WP_011330907.1">
    <property type="nucleotide sequence ID" value="NC_007484.1"/>
</dbReference>
<dbReference type="SMR" id="Q3J8X0"/>
<dbReference type="FunCoup" id="Q3J8X0">
    <property type="interactions" value="80"/>
</dbReference>
<dbReference type="STRING" id="323261.Noc_2268"/>
<dbReference type="KEGG" id="noc:Noc_2268"/>
<dbReference type="eggNOG" id="COG2924">
    <property type="taxonomic scope" value="Bacteria"/>
</dbReference>
<dbReference type="HOGENOM" id="CLU_170994_0_0_6"/>
<dbReference type="InParanoid" id="Q3J8X0"/>
<dbReference type="Proteomes" id="UP000006838">
    <property type="component" value="Chromosome"/>
</dbReference>
<dbReference type="GO" id="GO:0005829">
    <property type="term" value="C:cytosol"/>
    <property type="evidence" value="ECO:0007669"/>
    <property type="project" value="TreeGrafter"/>
</dbReference>
<dbReference type="GO" id="GO:0005506">
    <property type="term" value="F:iron ion binding"/>
    <property type="evidence" value="ECO:0007669"/>
    <property type="project" value="UniProtKB-UniRule"/>
</dbReference>
<dbReference type="GO" id="GO:0034599">
    <property type="term" value="P:cellular response to oxidative stress"/>
    <property type="evidence" value="ECO:0007669"/>
    <property type="project" value="TreeGrafter"/>
</dbReference>
<dbReference type="FunFam" id="1.10.3880.10:FF:000001">
    <property type="entry name" value="Probable Fe(2+)-trafficking protein"/>
    <property type="match status" value="1"/>
</dbReference>
<dbReference type="Gene3D" id="1.10.3880.10">
    <property type="entry name" value="Fe(II) trafficking protein YggX"/>
    <property type="match status" value="1"/>
</dbReference>
<dbReference type="HAMAP" id="MF_00686">
    <property type="entry name" value="Fe_traffic_YggX"/>
    <property type="match status" value="1"/>
</dbReference>
<dbReference type="InterPro" id="IPR007457">
    <property type="entry name" value="Fe_traffick_prot_YggX"/>
</dbReference>
<dbReference type="InterPro" id="IPR036766">
    <property type="entry name" value="Fe_traffick_prot_YggX_sf"/>
</dbReference>
<dbReference type="NCBIfam" id="NF003817">
    <property type="entry name" value="PRK05408.1"/>
    <property type="match status" value="1"/>
</dbReference>
<dbReference type="PANTHER" id="PTHR36965">
    <property type="entry name" value="FE(2+)-TRAFFICKING PROTEIN-RELATED"/>
    <property type="match status" value="1"/>
</dbReference>
<dbReference type="PANTHER" id="PTHR36965:SF1">
    <property type="entry name" value="FE(2+)-TRAFFICKING PROTEIN-RELATED"/>
    <property type="match status" value="1"/>
</dbReference>
<dbReference type="Pfam" id="PF04362">
    <property type="entry name" value="Iron_traffic"/>
    <property type="match status" value="1"/>
</dbReference>
<dbReference type="PIRSF" id="PIRSF029827">
    <property type="entry name" value="Fe_traffic_YggX"/>
    <property type="match status" value="1"/>
</dbReference>
<dbReference type="SUPFAM" id="SSF111148">
    <property type="entry name" value="YggX-like"/>
    <property type="match status" value="1"/>
</dbReference>
<organism>
    <name type="scientific">Nitrosococcus oceani (strain ATCC 19707 / BCRC 17464 / JCM 30415 / NCIMB 11848 / C-107)</name>
    <dbReference type="NCBI Taxonomy" id="323261"/>
    <lineage>
        <taxon>Bacteria</taxon>
        <taxon>Pseudomonadati</taxon>
        <taxon>Pseudomonadota</taxon>
        <taxon>Gammaproteobacteria</taxon>
        <taxon>Chromatiales</taxon>
        <taxon>Chromatiaceae</taxon>
        <taxon>Nitrosococcus</taxon>
    </lineage>
</organism>
<proteinExistence type="inferred from homology"/>
<reference key="1">
    <citation type="journal article" date="2006" name="Appl. Environ. Microbiol.">
        <title>Complete genome sequence of the marine, chemolithoautotrophic, ammonia-oxidizing bacterium Nitrosococcus oceani ATCC 19707.</title>
        <authorList>
            <person name="Klotz M.G."/>
            <person name="Arp D.J."/>
            <person name="Chain P.S.G."/>
            <person name="El-Sheikh A.F."/>
            <person name="Hauser L.J."/>
            <person name="Hommes N.G."/>
            <person name="Larimer F.W."/>
            <person name="Malfatti S.A."/>
            <person name="Norton J.M."/>
            <person name="Poret-Peterson A.T."/>
            <person name="Vergez L.M."/>
            <person name="Ward B.B."/>
        </authorList>
    </citation>
    <scope>NUCLEOTIDE SEQUENCE [LARGE SCALE GENOMIC DNA]</scope>
    <source>
        <strain>ATCC 19707 / BCRC 17464 / JCM 30415 / NCIMB 11848 / C-107</strain>
    </source>
</reference>
<gene>
    <name type="ordered locus">Noc_2268</name>
</gene>
<keyword id="KW-0408">Iron</keyword>
<keyword id="KW-1185">Reference proteome</keyword>
<feature type="chain" id="PRO_0000246103" description="Probable Fe(2+)-trafficking protein">
    <location>
        <begin position="1"/>
        <end position="90"/>
    </location>
</feature>